<name>HMDH2_CAPAN</name>
<gene>
    <name type="primary">HMGR2</name>
</gene>
<organism>
    <name type="scientific">Capsicum annuum</name>
    <name type="common">Capsicum pepper</name>
    <dbReference type="NCBI Taxonomy" id="4072"/>
    <lineage>
        <taxon>Eukaryota</taxon>
        <taxon>Viridiplantae</taxon>
        <taxon>Streptophyta</taxon>
        <taxon>Embryophyta</taxon>
        <taxon>Tracheophyta</taxon>
        <taxon>Spermatophyta</taxon>
        <taxon>Magnoliopsida</taxon>
        <taxon>eudicotyledons</taxon>
        <taxon>Gunneridae</taxon>
        <taxon>Pentapetalae</taxon>
        <taxon>asterids</taxon>
        <taxon>lamiids</taxon>
        <taxon>Solanales</taxon>
        <taxon>Solanaceae</taxon>
        <taxon>Solanoideae</taxon>
        <taxon>Capsiceae</taxon>
        <taxon>Capsicum</taxon>
    </lineage>
</organism>
<reference key="1">
    <citation type="submission" date="1998-11" db="EMBL/GenBank/DDBJ databases">
        <title>Pathogen-inducible HMGR2 gene from hot pepper.</title>
        <authorList>
            <person name="Ha S.H."/>
            <person name="Kim J.B."/>
            <person name="Lee S.W."/>
            <person name="Hwang Y.S."/>
        </authorList>
    </citation>
    <scope>NUCLEOTIDE SEQUENCE [MRNA]</scope>
</reference>
<accession>Q9XEL8</accession>
<sequence>MDVRRRSEEAVYSSKVFAADEKPLKPHKQQQEEDNTLLIDASDALPLPLYFTNGLFFTMFFSVMYFLLSRWREKIRNSTPLHVVTLSELGAIVSLIASVIYLLGFFGIGFVQTFVARGNNDSWDEEDENDEQFILEEDSRRGPCAAATTLGCAVPTPPAKHIAPIVPQQPAVSIAEKPAPLVTPAASEEDEEIIKSVVQGKIPSYSLESKLGDCKRAASIRKEVLQRITGKSLEGLPLDGFNYESILGQCCEMTIGYVQIPVGIAGPLLLNGREYSVPMATTEGCLVASTNRGCKAIYASGGATSILLRDGMTRAPCVRFGTAKRAAELKFFVEDPINFETLANVFNQSSRFARLQRIQCAIAGKNLHMRFVCSTGDAMGMNMVSKGVQNVLDYLQNEYADMDVIGISANFCSDKKPAAVNWIEGRGKSVVCEAIITEEVVKKVLKTEVAALVELNMLKNLTGSALAGALGGFNAHASNIVSAVYIATGQDPAQNIESSHCITMMEAVNDGKDLHISVTMPSIEVGTVGGGTQLASQSACLNLLGVKGANREAPGSNARLLATIVAGSVLAGELSLMSAISAGQLVNSHMKYNRSTKDVTKASS</sequence>
<protein>
    <recommendedName>
        <fullName>3-hydroxy-3-methylglutaryl-coenzyme A reductase 2</fullName>
        <shortName>HMG-CoA reductase 2</shortName>
        <ecNumber>1.1.1.34</ecNumber>
    </recommendedName>
</protein>
<evidence type="ECO:0000250" key="1"/>
<evidence type="ECO:0000255" key="2"/>
<evidence type="ECO:0000255" key="3">
    <source>
        <dbReference type="PROSITE-ProRule" id="PRU10003"/>
    </source>
</evidence>
<evidence type="ECO:0000305" key="4"/>
<feature type="chain" id="PRO_0000114436" description="3-hydroxy-3-methylglutaryl-coenzyme A reductase 2">
    <location>
        <begin position="1"/>
        <end position="604"/>
    </location>
</feature>
<feature type="transmembrane region" description="Helical" evidence="2">
    <location>
        <begin position="47"/>
        <end position="67"/>
    </location>
</feature>
<feature type="transmembrane region" description="Helical" evidence="2">
    <location>
        <begin position="91"/>
        <end position="111"/>
    </location>
</feature>
<feature type="region of interest" description="Linker" evidence="1">
    <location>
        <begin position="112"/>
        <end position="188"/>
    </location>
</feature>
<feature type="region of interest" description="Catalytic" evidence="1">
    <location>
        <begin position="189"/>
        <end position="604"/>
    </location>
</feature>
<feature type="active site" description="Charge relay system" evidence="1">
    <location>
        <position position="283"/>
    </location>
</feature>
<feature type="active site" description="Charge relay system" evidence="1">
    <location>
        <position position="415"/>
    </location>
</feature>
<feature type="active site" description="Charge relay system" evidence="1">
    <location>
        <position position="491"/>
    </location>
</feature>
<feature type="active site" description="Proton donor" evidence="3">
    <location>
        <position position="589"/>
    </location>
</feature>
<feature type="glycosylation site" description="N-linked (GlcNAc...) asparagine" evidence="2">
    <location>
        <position position="120"/>
    </location>
</feature>
<feature type="glycosylation site" description="N-linked (GlcNAc...) asparagine" evidence="2">
    <location>
        <position position="347"/>
    </location>
</feature>
<feature type="glycosylation site" description="N-linked (GlcNAc...) asparagine" evidence="2">
    <location>
        <position position="460"/>
    </location>
</feature>
<feature type="glycosylation site" description="N-linked (GlcNAc...) asparagine" evidence="2">
    <location>
        <position position="593"/>
    </location>
</feature>
<comment type="function">
    <text>Catalyzes the synthesis of mevalonate. The specific precursor of all isoprenoid compounds present in plants.</text>
</comment>
<comment type="catalytic activity">
    <reaction evidence="3">
        <text>(R)-mevalonate + 2 NADP(+) + CoA = (3S)-3-hydroxy-3-methylglutaryl-CoA + 2 NADPH + 2 H(+)</text>
        <dbReference type="Rhea" id="RHEA:15989"/>
        <dbReference type="ChEBI" id="CHEBI:15378"/>
        <dbReference type="ChEBI" id="CHEBI:36464"/>
        <dbReference type="ChEBI" id="CHEBI:43074"/>
        <dbReference type="ChEBI" id="CHEBI:57287"/>
        <dbReference type="ChEBI" id="CHEBI:57783"/>
        <dbReference type="ChEBI" id="CHEBI:58349"/>
        <dbReference type="EC" id="1.1.1.34"/>
    </reaction>
</comment>
<comment type="pathway">
    <text>Metabolic intermediate biosynthesis; (R)-mevalonate biosynthesis; (R)-mevalonate from acetyl-CoA: step 3/3.</text>
</comment>
<comment type="subcellular location">
    <subcellularLocation>
        <location>Endoplasmic reticulum membrane</location>
        <topology>Multi-pass membrane protein</topology>
    </subcellularLocation>
</comment>
<comment type="similarity">
    <text evidence="4">Belongs to the HMG-CoA reductase family.</text>
</comment>
<keyword id="KW-0256">Endoplasmic reticulum</keyword>
<keyword id="KW-0325">Glycoprotein</keyword>
<keyword id="KW-0414">Isoprene biosynthesis</keyword>
<keyword id="KW-0472">Membrane</keyword>
<keyword id="KW-0521">NADP</keyword>
<keyword id="KW-0560">Oxidoreductase</keyword>
<keyword id="KW-0812">Transmembrane</keyword>
<keyword id="KW-1133">Transmembrane helix</keyword>
<dbReference type="EC" id="1.1.1.34"/>
<dbReference type="EMBL" id="AF110383">
    <property type="protein sequence ID" value="AAD28179.1"/>
    <property type="molecule type" value="mRNA"/>
</dbReference>
<dbReference type="SMR" id="Q9XEL8"/>
<dbReference type="GlyCosmos" id="Q9XEL8">
    <property type="glycosylation" value="4 sites, No reported glycans"/>
</dbReference>
<dbReference type="UniPathway" id="UPA00058">
    <property type="reaction ID" value="UER00103"/>
</dbReference>
<dbReference type="GO" id="GO:0005789">
    <property type="term" value="C:endoplasmic reticulum membrane"/>
    <property type="evidence" value="ECO:0007669"/>
    <property type="project" value="UniProtKB-SubCell"/>
</dbReference>
<dbReference type="GO" id="GO:0004420">
    <property type="term" value="F:hydroxymethylglutaryl-CoA reductase (NADPH) activity"/>
    <property type="evidence" value="ECO:0007669"/>
    <property type="project" value="UniProtKB-EC"/>
</dbReference>
<dbReference type="GO" id="GO:0015936">
    <property type="term" value="P:coenzyme A metabolic process"/>
    <property type="evidence" value="ECO:0007669"/>
    <property type="project" value="InterPro"/>
</dbReference>
<dbReference type="GO" id="GO:0008299">
    <property type="term" value="P:isoprenoid biosynthetic process"/>
    <property type="evidence" value="ECO:0007669"/>
    <property type="project" value="UniProtKB-KW"/>
</dbReference>
<dbReference type="CDD" id="cd00643">
    <property type="entry name" value="HMG-CoA_reductase_classI"/>
    <property type="match status" value="1"/>
</dbReference>
<dbReference type="FunFam" id="1.10.3270.10:FF:000002">
    <property type="entry name" value="3-hydroxy-3-methylglutaryl coenzyme A reductase"/>
    <property type="match status" value="1"/>
</dbReference>
<dbReference type="FunFam" id="3.30.70.420:FF:000001">
    <property type="entry name" value="3-hydroxy-3-methylglutaryl coenzyme A reductase"/>
    <property type="match status" value="1"/>
</dbReference>
<dbReference type="FunFam" id="3.90.770.10:FF:000001">
    <property type="entry name" value="3-hydroxy-3-methylglutaryl coenzyme A reductase"/>
    <property type="match status" value="1"/>
</dbReference>
<dbReference type="Gene3D" id="3.90.770.10">
    <property type="entry name" value="3-hydroxy-3-methylglutaryl-coenzyme A Reductase, Chain A, domain 2"/>
    <property type="match status" value="1"/>
</dbReference>
<dbReference type="Gene3D" id="1.10.3270.10">
    <property type="entry name" value="HMGR, N-terminal domain"/>
    <property type="match status" value="1"/>
</dbReference>
<dbReference type="Gene3D" id="3.30.70.420">
    <property type="entry name" value="Hydroxymethylglutaryl-CoA reductase, class I/II, NAD/NADP-binding domain"/>
    <property type="match status" value="1"/>
</dbReference>
<dbReference type="InterPro" id="IPR002202">
    <property type="entry name" value="HMG_CoA_Rdtase"/>
</dbReference>
<dbReference type="InterPro" id="IPR023074">
    <property type="entry name" value="HMG_CoA_Rdtase_cat_sf"/>
</dbReference>
<dbReference type="InterPro" id="IPR023076">
    <property type="entry name" value="HMG_CoA_Rdtase_CS"/>
</dbReference>
<dbReference type="InterPro" id="IPR004554">
    <property type="entry name" value="HMG_CoA_Rdtase_eu_arc"/>
</dbReference>
<dbReference type="InterPro" id="IPR023282">
    <property type="entry name" value="HMG_CoA_Rdtase_N"/>
</dbReference>
<dbReference type="InterPro" id="IPR009023">
    <property type="entry name" value="HMG_CoA_Rdtase_NAD(P)-bd_sf"/>
</dbReference>
<dbReference type="InterPro" id="IPR009029">
    <property type="entry name" value="HMG_CoA_Rdtase_sub-bd_dom_sf"/>
</dbReference>
<dbReference type="NCBIfam" id="TIGR00533">
    <property type="entry name" value="HMG_CoA_R_NADP"/>
    <property type="match status" value="1"/>
</dbReference>
<dbReference type="PANTHER" id="PTHR10572">
    <property type="entry name" value="3-HYDROXY-3-METHYLGLUTARYL-COENZYME A REDUCTASE"/>
    <property type="match status" value="1"/>
</dbReference>
<dbReference type="PANTHER" id="PTHR10572:SF24">
    <property type="entry name" value="3-HYDROXY-3-METHYLGLUTARYL-COENZYME A REDUCTASE"/>
    <property type="match status" value="1"/>
</dbReference>
<dbReference type="Pfam" id="PF00368">
    <property type="entry name" value="HMG-CoA_red"/>
    <property type="match status" value="1"/>
</dbReference>
<dbReference type="PRINTS" id="PR00071">
    <property type="entry name" value="HMGCOARDTASE"/>
</dbReference>
<dbReference type="SUPFAM" id="SSF55035">
    <property type="entry name" value="NAD-binding domain of HMG-CoA reductase"/>
    <property type="match status" value="1"/>
</dbReference>
<dbReference type="SUPFAM" id="SSF56542">
    <property type="entry name" value="Substrate-binding domain of HMG-CoA reductase"/>
    <property type="match status" value="1"/>
</dbReference>
<dbReference type="PROSITE" id="PS00066">
    <property type="entry name" value="HMG_COA_REDUCTASE_1"/>
    <property type="match status" value="1"/>
</dbReference>
<dbReference type="PROSITE" id="PS00318">
    <property type="entry name" value="HMG_COA_REDUCTASE_2"/>
    <property type="match status" value="1"/>
</dbReference>
<dbReference type="PROSITE" id="PS01192">
    <property type="entry name" value="HMG_COA_REDUCTASE_3"/>
    <property type="match status" value="1"/>
</dbReference>
<dbReference type="PROSITE" id="PS50065">
    <property type="entry name" value="HMG_COA_REDUCTASE_4"/>
    <property type="match status" value="1"/>
</dbReference>
<proteinExistence type="evidence at transcript level"/>